<proteinExistence type="predicted"/>
<name>Y4IR_SINFN</name>
<evidence type="ECO:0000305" key="1"/>
<reference key="1">
    <citation type="journal article" date="1997" name="Nature">
        <title>Molecular basis of symbiosis between Rhizobium and legumes.</title>
        <authorList>
            <person name="Freiberg C.A."/>
            <person name="Fellay R."/>
            <person name="Bairoch A."/>
            <person name="Broughton W.J."/>
            <person name="Rosenthal A."/>
            <person name="Perret X."/>
        </authorList>
    </citation>
    <scope>NUCLEOTIDE SEQUENCE [LARGE SCALE GENOMIC DNA]</scope>
    <source>
        <strain>NBRC 101917 / NGR234</strain>
    </source>
</reference>
<reference key="2">
    <citation type="journal article" date="2009" name="Appl. Environ. Microbiol.">
        <title>Rhizobium sp. strain NGR234 possesses a remarkable number of secretion systems.</title>
        <authorList>
            <person name="Schmeisser C."/>
            <person name="Liesegang H."/>
            <person name="Krysciak D."/>
            <person name="Bakkou N."/>
            <person name="Le Quere A."/>
            <person name="Wollherr A."/>
            <person name="Heinemeyer I."/>
            <person name="Morgenstern B."/>
            <person name="Pommerening-Roeser A."/>
            <person name="Flores M."/>
            <person name="Palacios R."/>
            <person name="Brenner S."/>
            <person name="Gottschalk G."/>
            <person name="Schmitz R.A."/>
            <person name="Broughton W.J."/>
            <person name="Perret X."/>
            <person name="Strittmatter A.W."/>
            <person name="Streit W.R."/>
        </authorList>
    </citation>
    <scope>NUCLEOTIDE SEQUENCE [LARGE SCALE GENOMIC DNA]</scope>
    <source>
        <strain>NBRC 101917 / NGR234</strain>
    </source>
</reference>
<keyword id="KW-0614">Plasmid</keyword>
<keyword id="KW-1185">Reference proteome</keyword>
<gene>
    <name type="ordered locus">NGR_a03310</name>
    <name type="ORF">y4iR</name>
</gene>
<dbReference type="EMBL" id="U00090">
    <property type="protein sequence ID" value="AAB92457.1"/>
    <property type="molecule type" value="Genomic_DNA"/>
</dbReference>
<dbReference type="PIR" id="T10853">
    <property type="entry name" value="T10853"/>
</dbReference>
<dbReference type="RefSeq" id="NP_443895.1">
    <property type="nucleotide sequence ID" value="NC_000914.2"/>
</dbReference>
<dbReference type="KEGG" id="rhi:NGR_a03310"/>
<dbReference type="eggNOG" id="ENOG5030NIG">
    <property type="taxonomic scope" value="Bacteria"/>
</dbReference>
<dbReference type="HOGENOM" id="CLU_112903_0_0_5"/>
<dbReference type="OrthoDB" id="8378350at2"/>
<dbReference type="Proteomes" id="UP000001054">
    <property type="component" value="Plasmid pNGR234a"/>
</dbReference>
<dbReference type="InterPro" id="IPR024559">
    <property type="entry name" value="DUF3846"/>
</dbReference>
<dbReference type="Pfam" id="PF12957">
    <property type="entry name" value="DUF3846"/>
    <property type="match status" value="1"/>
</dbReference>
<dbReference type="PROSITE" id="PS51257">
    <property type="entry name" value="PROKAR_LIPOPROTEIN"/>
    <property type="match status" value="1"/>
</dbReference>
<feature type="chain" id="PRO_0000200856" description="Uncharacterized protein y4iR">
    <location>
        <begin position="1"/>
        <end position="161"/>
    </location>
</feature>
<protein>
    <recommendedName>
        <fullName>Uncharacterized protein y4iR</fullName>
    </recommendedName>
</protein>
<geneLocation type="plasmid">
    <name>sym pNGR234a</name>
</geneLocation>
<comment type="similarity">
    <text evidence="1">To R.leguminosarum PsiB.</text>
</comment>
<organism>
    <name type="scientific">Sinorhizobium fredii (strain NBRC 101917 / NGR234)</name>
    <dbReference type="NCBI Taxonomy" id="394"/>
    <lineage>
        <taxon>Bacteria</taxon>
        <taxon>Pseudomonadati</taxon>
        <taxon>Pseudomonadota</taxon>
        <taxon>Alphaproteobacteria</taxon>
        <taxon>Hyphomicrobiales</taxon>
        <taxon>Rhizobiaceae</taxon>
        <taxon>Sinorhizobium/Ensifer group</taxon>
        <taxon>Sinorhizobium</taxon>
    </lineage>
</organism>
<accession>P55485</accession>
<sequence length="161" mass="17595">MKNVAYLLDPETTLFRTVEVADGTGLAPIFSLLGCRLVQMIRFDDSHALFLDDEGLRDGITAFTVFASYPQPLGGKIVLIRGDGSEPHFSPSIKIEDAAVHFKCCRPVLDPVFVTADDATPKGLILPGALADLKVRIEQRPPMLMDGRHDVYRARGDGLNS</sequence>